<protein>
    <recommendedName>
        <fullName evidence="1">Ribonuclease H</fullName>
        <shortName evidence="1">RNase H</shortName>
        <ecNumber evidence="1">3.1.26.4</ecNumber>
    </recommendedName>
</protein>
<gene>
    <name evidence="1" type="primary">rnhA</name>
    <name type="ordered locus">lpg1383</name>
</gene>
<organism>
    <name type="scientific">Legionella pneumophila subsp. pneumophila (strain Philadelphia 1 / ATCC 33152 / DSM 7513)</name>
    <dbReference type="NCBI Taxonomy" id="272624"/>
    <lineage>
        <taxon>Bacteria</taxon>
        <taxon>Pseudomonadati</taxon>
        <taxon>Pseudomonadota</taxon>
        <taxon>Gammaproteobacteria</taxon>
        <taxon>Legionellales</taxon>
        <taxon>Legionellaceae</taxon>
        <taxon>Legionella</taxon>
    </lineage>
</organism>
<comment type="function">
    <text evidence="1">Endonuclease that specifically degrades the RNA of RNA-DNA hybrids.</text>
</comment>
<comment type="catalytic activity">
    <reaction evidence="1">
        <text>Endonucleolytic cleavage to 5'-phosphomonoester.</text>
        <dbReference type="EC" id="3.1.26.4"/>
    </reaction>
</comment>
<comment type="cofactor">
    <cofactor evidence="1">
        <name>Mg(2+)</name>
        <dbReference type="ChEBI" id="CHEBI:18420"/>
    </cofactor>
    <text evidence="1">Binds 1 Mg(2+) ion per subunit. May bind a second metal ion at a regulatory site, or after substrate binding.</text>
</comment>
<comment type="subunit">
    <text evidence="1">Monomer.</text>
</comment>
<comment type="subcellular location">
    <subcellularLocation>
        <location evidence="1">Cytoplasm</location>
    </subcellularLocation>
</comment>
<comment type="similarity">
    <text evidence="1">Belongs to the RNase H family.</text>
</comment>
<reference key="1">
    <citation type="journal article" date="2004" name="Science">
        <title>The genomic sequence of the accidental pathogen Legionella pneumophila.</title>
        <authorList>
            <person name="Chien M."/>
            <person name="Morozova I."/>
            <person name="Shi S."/>
            <person name="Sheng H."/>
            <person name="Chen J."/>
            <person name="Gomez S.M."/>
            <person name="Asamani G."/>
            <person name="Hill K."/>
            <person name="Nuara J."/>
            <person name="Feder M."/>
            <person name="Rineer J."/>
            <person name="Greenberg J.J."/>
            <person name="Steshenko V."/>
            <person name="Park S.H."/>
            <person name="Zhao B."/>
            <person name="Teplitskaya E."/>
            <person name="Edwards J.R."/>
            <person name="Pampou S."/>
            <person name="Georghiou A."/>
            <person name="Chou I.-C."/>
            <person name="Iannuccilli W."/>
            <person name="Ulz M.E."/>
            <person name="Kim D.H."/>
            <person name="Geringer-Sameth A."/>
            <person name="Goldsberry C."/>
            <person name="Morozov P."/>
            <person name="Fischer S.G."/>
            <person name="Segal G."/>
            <person name="Qu X."/>
            <person name="Rzhetsky A."/>
            <person name="Zhang P."/>
            <person name="Cayanis E."/>
            <person name="De Jong P.J."/>
            <person name="Ju J."/>
            <person name="Kalachikov S."/>
            <person name="Shuman H.A."/>
            <person name="Russo J.J."/>
        </authorList>
    </citation>
    <scope>NUCLEOTIDE SEQUENCE [LARGE SCALE GENOMIC DNA]</scope>
    <source>
        <strain>Philadelphia 1 / ATCC 33152 / DSM 7513</strain>
    </source>
</reference>
<evidence type="ECO:0000255" key="1">
    <source>
        <dbReference type="HAMAP-Rule" id="MF_00042"/>
    </source>
</evidence>
<evidence type="ECO:0000255" key="2">
    <source>
        <dbReference type="PROSITE-ProRule" id="PRU00408"/>
    </source>
</evidence>
<sequence>MKVEIYTDGACKGNPGPGGWGVLLRYNGREKTLHGGEAQTTNNRMELMAAIKGLEALKRPCEVDLYTDSQYLQQGMKEWIKTWKRNGWRNSKKELVKNAELWKSLDNLASIHNIHWHWVKGHSGHLENDLVDALANLGIEELS</sequence>
<accession>Q5ZVQ7</accession>
<keyword id="KW-0963">Cytoplasm</keyword>
<keyword id="KW-0255">Endonuclease</keyword>
<keyword id="KW-0378">Hydrolase</keyword>
<keyword id="KW-0460">Magnesium</keyword>
<keyword id="KW-0479">Metal-binding</keyword>
<keyword id="KW-0540">Nuclease</keyword>
<keyword id="KW-1185">Reference proteome</keyword>
<proteinExistence type="inferred from homology"/>
<feature type="chain" id="PRO_0000332621" description="Ribonuclease H">
    <location>
        <begin position="1"/>
        <end position="143"/>
    </location>
</feature>
<feature type="domain" description="RNase H type-1" evidence="2">
    <location>
        <begin position="1"/>
        <end position="140"/>
    </location>
</feature>
<feature type="binding site" evidence="1">
    <location>
        <position position="8"/>
    </location>
    <ligand>
        <name>Mg(2+)</name>
        <dbReference type="ChEBI" id="CHEBI:18420"/>
        <label>1</label>
    </ligand>
</feature>
<feature type="binding site" evidence="1">
    <location>
        <position position="8"/>
    </location>
    <ligand>
        <name>Mg(2+)</name>
        <dbReference type="ChEBI" id="CHEBI:18420"/>
        <label>2</label>
    </ligand>
</feature>
<feature type="binding site" evidence="1">
    <location>
        <position position="46"/>
    </location>
    <ligand>
        <name>Mg(2+)</name>
        <dbReference type="ChEBI" id="CHEBI:18420"/>
        <label>1</label>
    </ligand>
</feature>
<feature type="binding site" evidence="1">
    <location>
        <position position="68"/>
    </location>
    <ligand>
        <name>Mg(2+)</name>
        <dbReference type="ChEBI" id="CHEBI:18420"/>
        <label>1</label>
    </ligand>
</feature>
<feature type="binding site" evidence="1">
    <location>
        <position position="132"/>
    </location>
    <ligand>
        <name>Mg(2+)</name>
        <dbReference type="ChEBI" id="CHEBI:18420"/>
        <label>2</label>
    </ligand>
</feature>
<name>RNH_LEGPH</name>
<dbReference type="EC" id="3.1.26.4" evidence="1"/>
<dbReference type="EMBL" id="AE017354">
    <property type="protein sequence ID" value="AAU27465.1"/>
    <property type="molecule type" value="Genomic_DNA"/>
</dbReference>
<dbReference type="RefSeq" id="WP_010947113.1">
    <property type="nucleotide sequence ID" value="NC_002942.5"/>
</dbReference>
<dbReference type="RefSeq" id="YP_095412.1">
    <property type="nucleotide sequence ID" value="NC_002942.5"/>
</dbReference>
<dbReference type="SMR" id="Q5ZVQ7"/>
<dbReference type="STRING" id="272624.lpg1383"/>
<dbReference type="PaxDb" id="272624-lpg1383"/>
<dbReference type="GeneID" id="57035373"/>
<dbReference type="KEGG" id="lpn:lpg1383"/>
<dbReference type="PATRIC" id="fig|272624.6.peg.1453"/>
<dbReference type="eggNOG" id="COG0328">
    <property type="taxonomic scope" value="Bacteria"/>
</dbReference>
<dbReference type="HOGENOM" id="CLU_030894_6_0_6"/>
<dbReference type="OrthoDB" id="7845843at2"/>
<dbReference type="Proteomes" id="UP000000609">
    <property type="component" value="Chromosome"/>
</dbReference>
<dbReference type="GO" id="GO:0005737">
    <property type="term" value="C:cytoplasm"/>
    <property type="evidence" value="ECO:0007669"/>
    <property type="project" value="UniProtKB-SubCell"/>
</dbReference>
<dbReference type="GO" id="GO:0000287">
    <property type="term" value="F:magnesium ion binding"/>
    <property type="evidence" value="ECO:0007669"/>
    <property type="project" value="UniProtKB-UniRule"/>
</dbReference>
<dbReference type="GO" id="GO:0003676">
    <property type="term" value="F:nucleic acid binding"/>
    <property type="evidence" value="ECO:0007669"/>
    <property type="project" value="InterPro"/>
</dbReference>
<dbReference type="GO" id="GO:0004523">
    <property type="term" value="F:RNA-DNA hybrid ribonuclease activity"/>
    <property type="evidence" value="ECO:0007669"/>
    <property type="project" value="UniProtKB-UniRule"/>
</dbReference>
<dbReference type="GO" id="GO:0043137">
    <property type="term" value="P:DNA replication, removal of RNA primer"/>
    <property type="evidence" value="ECO:0007669"/>
    <property type="project" value="TreeGrafter"/>
</dbReference>
<dbReference type="CDD" id="cd09278">
    <property type="entry name" value="RNase_HI_prokaryote_like"/>
    <property type="match status" value="1"/>
</dbReference>
<dbReference type="FunFam" id="3.30.420.10:FF:000089">
    <property type="entry name" value="Ribonuclease H"/>
    <property type="match status" value="1"/>
</dbReference>
<dbReference type="Gene3D" id="3.30.420.10">
    <property type="entry name" value="Ribonuclease H-like superfamily/Ribonuclease H"/>
    <property type="match status" value="1"/>
</dbReference>
<dbReference type="HAMAP" id="MF_00042">
    <property type="entry name" value="RNase_H"/>
    <property type="match status" value="1"/>
</dbReference>
<dbReference type="InterPro" id="IPR050092">
    <property type="entry name" value="RNase_H"/>
</dbReference>
<dbReference type="InterPro" id="IPR012337">
    <property type="entry name" value="RNaseH-like_sf"/>
</dbReference>
<dbReference type="InterPro" id="IPR002156">
    <property type="entry name" value="RNaseH_domain"/>
</dbReference>
<dbReference type="InterPro" id="IPR036397">
    <property type="entry name" value="RNaseH_sf"/>
</dbReference>
<dbReference type="InterPro" id="IPR022892">
    <property type="entry name" value="RNaseHI"/>
</dbReference>
<dbReference type="NCBIfam" id="NF001236">
    <property type="entry name" value="PRK00203.1"/>
    <property type="match status" value="1"/>
</dbReference>
<dbReference type="PANTHER" id="PTHR10642">
    <property type="entry name" value="RIBONUCLEASE H1"/>
    <property type="match status" value="1"/>
</dbReference>
<dbReference type="PANTHER" id="PTHR10642:SF26">
    <property type="entry name" value="RIBONUCLEASE H1"/>
    <property type="match status" value="1"/>
</dbReference>
<dbReference type="Pfam" id="PF00075">
    <property type="entry name" value="RNase_H"/>
    <property type="match status" value="1"/>
</dbReference>
<dbReference type="SUPFAM" id="SSF53098">
    <property type="entry name" value="Ribonuclease H-like"/>
    <property type="match status" value="1"/>
</dbReference>
<dbReference type="PROSITE" id="PS50879">
    <property type="entry name" value="RNASE_H_1"/>
    <property type="match status" value="1"/>
</dbReference>